<protein>
    <recommendedName>
        <fullName evidence="1">Holliday junction branch migration complex subunit RuvB</fullName>
        <ecNumber evidence="1">3.6.4.-</ecNumber>
    </recommendedName>
</protein>
<dbReference type="EC" id="3.6.4.-" evidence="1"/>
<dbReference type="EMBL" id="CP000450">
    <property type="protein sequence ID" value="ABI58568.1"/>
    <property type="molecule type" value="Genomic_DNA"/>
</dbReference>
<dbReference type="RefSeq" id="WP_011633412.1">
    <property type="nucleotide sequence ID" value="NC_008344.1"/>
</dbReference>
<dbReference type="SMR" id="Q0AJA3"/>
<dbReference type="STRING" id="335283.Neut_0284"/>
<dbReference type="KEGG" id="net:Neut_0284"/>
<dbReference type="eggNOG" id="COG2255">
    <property type="taxonomic scope" value="Bacteria"/>
</dbReference>
<dbReference type="HOGENOM" id="CLU_055599_1_0_4"/>
<dbReference type="OrthoDB" id="9804478at2"/>
<dbReference type="Proteomes" id="UP000001966">
    <property type="component" value="Chromosome"/>
</dbReference>
<dbReference type="GO" id="GO:0005737">
    <property type="term" value="C:cytoplasm"/>
    <property type="evidence" value="ECO:0007669"/>
    <property type="project" value="UniProtKB-SubCell"/>
</dbReference>
<dbReference type="GO" id="GO:0048476">
    <property type="term" value="C:Holliday junction resolvase complex"/>
    <property type="evidence" value="ECO:0007669"/>
    <property type="project" value="UniProtKB-UniRule"/>
</dbReference>
<dbReference type="GO" id="GO:0005524">
    <property type="term" value="F:ATP binding"/>
    <property type="evidence" value="ECO:0007669"/>
    <property type="project" value="UniProtKB-UniRule"/>
</dbReference>
<dbReference type="GO" id="GO:0016887">
    <property type="term" value="F:ATP hydrolysis activity"/>
    <property type="evidence" value="ECO:0007669"/>
    <property type="project" value="InterPro"/>
</dbReference>
<dbReference type="GO" id="GO:0000400">
    <property type="term" value="F:four-way junction DNA binding"/>
    <property type="evidence" value="ECO:0007669"/>
    <property type="project" value="UniProtKB-UniRule"/>
</dbReference>
<dbReference type="GO" id="GO:0009378">
    <property type="term" value="F:four-way junction helicase activity"/>
    <property type="evidence" value="ECO:0007669"/>
    <property type="project" value="InterPro"/>
</dbReference>
<dbReference type="GO" id="GO:0006310">
    <property type="term" value="P:DNA recombination"/>
    <property type="evidence" value="ECO:0007669"/>
    <property type="project" value="UniProtKB-UniRule"/>
</dbReference>
<dbReference type="GO" id="GO:0006281">
    <property type="term" value="P:DNA repair"/>
    <property type="evidence" value="ECO:0007669"/>
    <property type="project" value="UniProtKB-UniRule"/>
</dbReference>
<dbReference type="CDD" id="cd00009">
    <property type="entry name" value="AAA"/>
    <property type="match status" value="1"/>
</dbReference>
<dbReference type="FunFam" id="1.10.10.10:FF:000086">
    <property type="entry name" value="Holliday junction ATP-dependent DNA helicase RuvB"/>
    <property type="match status" value="1"/>
</dbReference>
<dbReference type="FunFam" id="3.40.50.300:FF:000073">
    <property type="entry name" value="Holliday junction ATP-dependent DNA helicase RuvB"/>
    <property type="match status" value="1"/>
</dbReference>
<dbReference type="Gene3D" id="1.10.8.60">
    <property type="match status" value="1"/>
</dbReference>
<dbReference type="Gene3D" id="3.40.50.300">
    <property type="entry name" value="P-loop containing nucleotide triphosphate hydrolases"/>
    <property type="match status" value="1"/>
</dbReference>
<dbReference type="Gene3D" id="1.10.10.10">
    <property type="entry name" value="Winged helix-like DNA-binding domain superfamily/Winged helix DNA-binding domain"/>
    <property type="match status" value="1"/>
</dbReference>
<dbReference type="HAMAP" id="MF_00016">
    <property type="entry name" value="DNA_HJ_migration_RuvB"/>
    <property type="match status" value="1"/>
</dbReference>
<dbReference type="InterPro" id="IPR003593">
    <property type="entry name" value="AAA+_ATPase"/>
</dbReference>
<dbReference type="InterPro" id="IPR041445">
    <property type="entry name" value="AAA_lid_4"/>
</dbReference>
<dbReference type="InterPro" id="IPR004605">
    <property type="entry name" value="DNA_helicase_Holl-junc_RuvB"/>
</dbReference>
<dbReference type="InterPro" id="IPR027417">
    <property type="entry name" value="P-loop_NTPase"/>
</dbReference>
<dbReference type="InterPro" id="IPR008824">
    <property type="entry name" value="RuvB-like_N"/>
</dbReference>
<dbReference type="InterPro" id="IPR008823">
    <property type="entry name" value="RuvB_C"/>
</dbReference>
<dbReference type="InterPro" id="IPR036388">
    <property type="entry name" value="WH-like_DNA-bd_sf"/>
</dbReference>
<dbReference type="InterPro" id="IPR036390">
    <property type="entry name" value="WH_DNA-bd_sf"/>
</dbReference>
<dbReference type="NCBIfam" id="NF000868">
    <property type="entry name" value="PRK00080.1"/>
    <property type="match status" value="1"/>
</dbReference>
<dbReference type="NCBIfam" id="TIGR00635">
    <property type="entry name" value="ruvB"/>
    <property type="match status" value="1"/>
</dbReference>
<dbReference type="PANTHER" id="PTHR42848">
    <property type="match status" value="1"/>
</dbReference>
<dbReference type="PANTHER" id="PTHR42848:SF1">
    <property type="entry name" value="HOLLIDAY JUNCTION BRANCH MIGRATION COMPLEX SUBUNIT RUVB"/>
    <property type="match status" value="1"/>
</dbReference>
<dbReference type="Pfam" id="PF17864">
    <property type="entry name" value="AAA_lid_4"/>
    <property type="match status" value="1"/>
</dbReference>
<dbReference type="Pfam" id="PF05491">
    <property type="entry name" value="RuvB_C"/>
    <property type="match status" value="1"/>
</dbReference>
<dbReference type="Pfam" id="PF05496">
    <property type="entry name" value="RuvB_N"/>
    <property type="match status" value="1"/>
</dbReference>
<dbReference type="SMART" id="SM00382">
    <property type="entry name" value="AAA"/>
    <property type="match status" value="1"/>
</dbReference>
<dbReference type="SUPFAM" id="SSF52540">
    <property type="entry name" value="P-loop containing nucleoside triphosphate hydrolases"/>
    <property type="match status" value="1"/>
</dbReference>
<dbReference type="SUPFAM" id="SSF46785">
    <property type="entry name" value="Winged helix' DNA-binding domain"/>
    <property type="match status" value="1"/>
</dbReference>
<gene>
    <name evidence="1" type="primary">ruvB</name>
    <name type="ordered locus">Neut_0284</name>
</gene>
<feature type="chain" id="PRO_1000001433" description="Holliday junction branch migration complex subunit RuvB">
    <location>
        <begin position="1"/>
        <end position="346"/>
    </location>
</feature>
<feature type="region of interest" description="Large ATPase domain (RuvB-L)" evidence="1">
    <location>
        <begin position="4"/>
        <end position="185"/>
    </location>
</feature>
<feature type="region of interest" description="Small ATPAse domain (RuvB-S)" evidence="1">
    <location>
        <begin position="186"/>
        <end position="256"/>
    </location>
</feature>
<feature type="region of interest" description="Head domain (RuvB-H)" evidence="1">
    <location>
        <begin position="259"/>
        <end position="346"/>
    </location>
</feature>
<feature type="binding site" evidence="1">
    <location>
        <position position="24"/>
    </location>
    <ligand>
        <name>ATP</name>
        <dbReference type="ChEBI" id="CHEBI:30616"/>
    </ligand>
</feature>
<feature type="binding site" evidence="1">
    <location>
        <position position="25"/>
    </location>
    <ligand>
        <name>ATP</name>
        <dbReference type="ChEBI" id="CHEBI:30616"/>
    </ligand>
</feature>
<feature type="binding site" evidence="1">
    <location>
        <position position="66"/>
    </location>
    <ligand>
        <name>ATP</name>
        <dbReference type="ChEBI" id="CHEBI:30616"/>
    </ligand>
</feature>
<feature type="binding site" evidence="1">
    <location>
        <position position="69"/>
    </location>
    <ligand>
        <name>ATP</name>
        <dbReference type="ChEBI" id="CHEBI:30616"/>
    </ligand>
</feature>
<feature type="binding site" evidence="1">
    <location>
        <position position="70"/>
    </location>
    <ligand>
        <name>ATP</name>
        <dbReference type="ChEBI" id="CHEBI:30616"/>
    </ligand>
</feature>
<feature type="binding site" evidence="1">
    <location>
        <position position="70"/>
    </location>
    <ligand>
        <name>Mg(2+)</name>
        <dbReference type="ChEBI" id="CHEBI:18420"/>
    </ligand>
</feature>
<feature type="binding site" evidence="1">
    <location>
        <position position="71"/>
    </location>
    <ligand>
        <name>ATP</name>
        <dbReference type="ChEBI" id="CHEBI:30616"/>
    </ligand>
</feature>
<feature type="binding site" evidence="1">
    <location>
        <begin position="132"/>
        <end position="134"/>
    </location>
    <ligand>
        <name>ATP</name>
        <dbReference type="ChEBI" id="CHEBI:30616"/>
    </ligand>
</feature>
<feature type="binding site" evidence="1">
    <location>
        <position position="175"/>
    </location>
    <ligand>
        <name>ATP</name>
        <dbReference type="ChEBI" id="CHEBI:30616"/>
    </ligand>
</feature>
<feature type="binding site" evidence="1">
    <location>
        <position position="185"/>
    </location>
    <ligand>
        <name>ATP</name>
        <dbReference type="ChEBI" id="CHEBI:30616"/>
    </ligand>
</feature>
<feature type="binding site" evidence="1">
    <location>
        <position position="222"/>
    </location>
    <ligand>
        <name>ATP</name>
        <dbReference type="ChEBI" id="CHEBI:30616"/>
    </ligand>
</feature>
<feature type="binding site" evidence="1">
    <location>
        <position position="295"/>
    </location>
    <ligand>
        <name>DNA</name>
        <dbReference type="ChEBI" id="CHEBI:16991"/>
    </ligand>
</feature>
<feature type="binding site" evidence="1">
    <location>
        <position position="314"/>
    </location>
    <ligand>
        <name>DNA</name>
        <dbReference type="ChEBI" id="CHEBI:16991"/>
    </ligand>
</feature>
<feature type="binding site" evidence="1">
    <location>
        <position position="319"/>
    </location>
    <ligand>
        <name>DNA</name>
        <dbReference type="ChEBI" id="CHEBI:16991"/>
    </ligand>
</feature>
<comment type="function">
    <text evidence="1">The RuvA-RuvB-RuvC complex processes Holliday junction (HJ) DNA during genetic recombination and DNA repair, while the RuvA-RuvB complex plays an important role in the rescue of blocked DNA replication forks via replication fork reversal (RFR). RuvA specifically binds to HJ cruciform DNA, conferring on it an open structure. The RuvB hexamer acts as an ATP-dependent pump, pulling dsDNA into and through the RuvAB complex. RuvB forms 2 homohexamers on either side of HJ DNA bound by 1 or 2 RuvA tetramers; 4 subunits per hexamer contact DNA at a time. Coordinated motions by a converter formed by DNA-disengaged RuvB subunits stimulates ATP hydrolysis and nucleotide exchange. Immobilization of the converter enables RuvB to convert the ATP-contained energy into a lever motion, pulling 2 nucleotides of DNA out of the RuvA tetramer per ATP hydrolyzed, thus driving DNA branch migration. The RuvB motors rotate together with the DNA substrate, which together with the progressing nucleotide cycle form the mechanistic basis for DNA recombination by continuous HJ branch migration. Branch migration allows RuvC to scan DNA until it finds its consensus sequence, where it cleaves and resolves cruciform DNA.</text>
</comment>
<comment type="catalytic activity">
    <reaction evidence="1">
        <text>ATP + H2O = ADP + phosphate + H(+)</text>
        <dbReference type="Rhea" id="RHEA:13065"/>
        <dbReference type="ChEBI" id="CHEBI:15377"/>
        <dbReference type="ChEBI" id="CHEBI:15378"/>
        <dbReference type="ChEBI" id="CHEBI:30616"/>
        <dbReference type="ChEBI" id="CHEBI:43474"/>
        <dbReference type="ChEBI" id="CHEBI:456216"/>
    </reaction>
</comment>
<comment type="subunit">
    <text evidence="1">Homohexamer. Forms an RuvA(8)-RuvB(12)-Holliday junction (HJ) complex. HJ DNA is sandwiched between 2 RuvA tetramers; dsDNA enters through RuvA and exits via RuvB. An RuvB hexamer assembles on each DNA strand where it exits the tetramer. Each RuvB hexamer is contacted by two RuvA subunits (via domain III) on 2 adjacent RuvB subunits; this complex drives branch migration. In the full resolvosome a probable DNA-RuvA(4)-RuvB(12)-RuvC(2) complex forms which resolves the HJ.</text>
</comment>
<comment type="subcellular location">
    <subcellularLocation>
        <location evidence="1">Cytoplasm</location>
    </subcellularLocation>
</comment>
<comment type="domain">
    <text evidence="1">Has 3 domains, the large (RuvB-L) and small ATPase (RuvB-S) domains and the C-terminal head (RuvB-H) domain. The head domain binds DNA, while the ATPase domains jointly bind ATP, ADP or are empty depending on the state of the subunit in the translocation cycle. During a single DNA translocation step the structure of each domain remains the same, but their relative positions change.</text>
</comment>
<comment type="similarity">
    <text evidence="1">Belongs to the RuvB family.</text>
</comment>
<accession>Q0AJA3</accession>
<reference key="1">
    <citation type="journal article" date="2007" name="Environ. Microbiol.">
        <title>Whole-genome analysis of the ammonia-oxidizing bacterium, Nitrosomonas eutropha C91: implications for niche adaptation.</title>
        <authorList>
            <person name="Stein L.Y."/>
            <person name="Arp D.J."/>
            <person name="Berube P.M."/>
            <person name="Chain P.S."/>
            <person name="Hauser L."/>
            <person name="Jetten M.S."/>
            <person name="Klotz M.G."/>
            <person name="Larimer F.W."/>
            <person name="Norton J.M."/>
            <person name="Op den Camp H.J.M."/>
            <person name="Shin M."/>
            <person name="Wei X."/>
        </authorList>
    </citation>
    <scope>NUCLEOTIDE SEQUENCE [LARGE SCALE GENOMIC DNA]</scope>
    <source>
        <strain>DSM 101675 / C91 / Nm57</strain>
    </source>
</reference>
<proteinExistence type="inferred from homology"/>
<evidence type="ECO:0000255" key="1">
    <source>
        <dbReference type="HAMAP-Rule" id="MF_00016"/>
    </source>
</evidence>
<organism>
    <name type="scientific">Nitrosomonas eutropha (strain DSM 101675 / C91 / Nm57)</name>
    <dbReference type="NCBI Taxonomy" id="335283"/>
    <lineage>
        <taxon>Bacteria</taxon>
        <taxon>Pseudomonadati</taxon>
        <taxon>Pseudomonadota</taxon>
        <taxon>Betaproteobacteria</taxon>
        <taxon>Nitrosomonadales</taxon>
        <taxon>Nitrosomonadaceae</taxon>
        <taxon>Nitrosomonas</taxon>
    </lineage>
</organism>
<name>RUVB_NITEC</name>
<sequence length="346" mass="38333">MIESDRIITASPFSSQEEVIERALRPVQLDDYVGQEKIREQLKIFIEAARQRQEALDHVLLFGPPGLGKTTLAHIIAREMGVNLRHTSGPVLERAGDLAALLTNLEANDVLFIDEIHRLSPVVEEILYPAMEDYQLDIMIGEGVAARSVKIDLPSFTLVGATTRAGMLTNPLRDRFGIVSRLEFYTSDELSKIVTRSAGLLDVDITADGAREIACRSRGTPRIANRLLRRVRDFAEVRANGRIDRQVADAALQMLDVDAAGLDVLDRKLLLAVLEKFGGGPVGVDNLAAAINEERDTIEEVLEPYLIQQGFLQRTPRGRMATTMTYQHFDIIPLQQAATPGLFNPD</sequence>
<keyword id="KW-0067">ATP-binding</keyword>
<keyword id="KW-0963">Cytoplasm</keyword>
<keyword id="KW-0227">DNA damage</keyword>
<keyword id="KW-0233">DNA recombination</keyword>
<keyword id="KW-0234">DNA repair</keyword>
<keyword id="KW-0238">DNA-binding</keyword>
<keyword id="KW-0378">Hydrolase</keyword>
<keyword id="KW-0547">Nucleotide-binding</keyword>